<keyword id="KW-0413">Isomerase</keyword>
<proteinExistence type="inferred from homology"/>
<accession>B7H207</accession>
<gene>
    <name evidence="1" type="primary">rpiA</name>
    <name type="ordered locus">ABBFA_001537</name>
</gene>
<reference key="1">
    <citation type="journal article" date="2008" name="J. Bacteriol.">
        <title>Comparative genome sequence analysis of multidrug-resistant Acinetobacter baumannii.</title>
        <authorList>
            <person name="Adams M.D."/>
            <person name="Goglin K."/>
            <person name="Molyneaux N."/>
            <person name="Hujer K.M."/>
            <person name="Lavender H."/>
            <person name="Jamison J.J."/>
            <person name="MacDonald I.J."/>
            <person name="Martin K.M."/>
            <person name="Russo T."/>
            <person name="Campagnari A.A."/>
            <person name="Hujer A.M."/>
            <person name="Bonomo R.A."/>
            <person name="Gill S.R."/>
        </authorList>
    </citation>
    <scope>NUCLEOTIDE SEQUENCE [LARGE SCALE GENOMIC DNA]</scope>
    <source>
        <strain>AB307-0294</strain>
    </source>
</reference>
<protein>
    <recommendedName>
        <fullName evidence="1">Ribose-5-phosphate isomerase A</fullName>
        <ecNumber evidence="1">5.3.1.6</ecNumber>
    </recommendedName>
    <alternativeName>
        <fullName evidence="1">Phosphoriboisomerase A</fullName>
        <shortName evidence="1">PRI</shortName>
    </alternativeName>
</protein>
<feature type="chain" id="PRO_1000194687" description="Ribose-5-phosphate isomerase A">
    <location>
        <begin position="1"/>
        <end position="223"/>
    </location>
</feature>
<feature type="active site" description="Proton acceptor" evidence="1">
    <location>
        <position position="105"/>
    </location>
</feature>
<feature type="binding site" evidence="1">
    <location>
        <begin position="32"/>
        <end position="35"/>
    </location>
    <ligand>
        <name>substrate</name>
    </ligand>
</feature>
<feature type="binding site" evidence="1">
    <location>
        <begin position="83"/>
        <end position="86"/>
    </location>
    <ligand>
        <name>substrate</name>
    </ligand>
</feature>
<feature type="binding site" evidence="1">
    <location>
        <begin position="96"/>
        <end position="99"/>
    </location>
    <ligand>
        <name>substrate</name>
    </ligand>
</feature>
<feature type="binding site" evidence="1">
    <location>
        <position position="123"/>
    </location>
    <ligand>
        <name>substrate</name>
    </ligand>
</feature>
<evidence type="ECO:0000255" key="1">
    <source>
        <dbReference type="HAMAP-Rule" id="MF_00170"/>
    </source>
</evidence>
<organism>
    <name type="scientific">Acinetobacter baumannii (strain AB307-0294)</name>
    <dbReference type="NCBI Taxonomy" id="557600"/>
    <lineage>
        <taxon>Bacteria</taxon>
        <taxon>Pseudomonadati</taxon>
        <taxon>Pseudomonadota</taxon>
        <taxon>Gammaproteobacteria</taxon>
        <taxon>Moraxellales</taxon>
        <taxon>Moraxellaceae</taxon>
        <taxon>Acinetobacter</taxon>
        <taxon>Acinetobacter calcoaceticus/baumannii complex</taxon>
    </lineage>
</organism>
<name>RPIA_ACIB3</name>
<sequence length="223" mass="23707">MSLYATQDEKKQAAAKAALKHLPKGGILGVGTGSTVNFLIDLLPELQLEAAVASSQATADRLKKLGIEVVDMNHVGSLDAYVDGADEIDRHMHMIKGGGAALTREKIVASIAKKFVCIVDDSKWVDQLGRDFPLPVEVIPMARSAVARKLVSLGGDPVYREGVVTDNGNVILDVFNLNILNAIDLEKTINNIPGVVTNGIFALNPATIAIVATNDGIEERTAQ</sequence>
<dbReference type="EC" id="5.3.1.6" evidence="1"/>
<dbReference type="EMBL" id="CP001172">
    <property type="protein sequence ID" value="ACJ57381.1"/>
    <property type="molecule type" value="Genomic_DNA"/>
</dbReference>
<dbReference type="RefSeq" id="WP_000061059.1">
    <property type="nucleotide sequence ID" value="NZ_CP001172.1"/>
</dbReference>
<dbReference type="SMR" id="B7H207"/>
<dbReference type="HOGENOM" id="CLU_056590_1_1_6"/>
<dbReference type="UniPathway" id="UPA00115">
    <property type="reaction ID" value="UER00412"/>
</dbReference>
<dbReference type="Proteomes" id="UP000006924">
    <property type="component" value="Chromosome"/>
</dbReference>
<dbReference type="GO" id="GO:0005829">
    <property type="term" value="C:cytosol"/>
    <property type="evidence" value="ECO:0007669"/>
    <property type="project" value="TreeGrafter"/>
</dbReference>
<dbReference type="GO" id="GO:0004751">
    <property type="term" value="F:ribose-5-phosphate isomerase activity"/>
    <property type="evidence" value="ECO:0007669"/>
    <property type="project" value="UniProtKB-UniRule"/>
</dbReference>
<dbReference type="GO" id="GO:0006014">
    <property type="term" value="P:D-ribose metabolic process"/>
    <property type="evidence" value="ECO:0007669"/>
    <property type="project" value="TreeGrafter"/>
</dbReference>
<dbReference type="GO" id="GO:0009052">
    <property type="term" value="P:pentose-phosphate shunt, non-oxidative branch"/>
    <property type="evidence" value="ECO:0007669"/>
    <property type="project" value="UniProtKB-UniRule"/>
</dbReference>
<dbReference type="CDD" id="cd01398">
    <property type="entry name" value="RPI_A"/>
    <property type="match status" value="1"/>
</dbReference>
<dbReference type="FunFam" id="3.30.70.260:FF:000004">
    <property type="entry name" value="Ribose-5-phosphate isomerase A"/>
    <property type="match status" value="1"/>
</dbReference>
<dbReference type="FunFam" id="3.40.50.1360:FF:000001">
    <property type="entry name" value="Ribose-5-phosphate isomerase A"/>
    <property type="match status" value="1"/>
</dbReference>
<dbReference type="Gene3D" id="3.30.70.260">
    <property type="match status" value="1"/>
</dbReference>
<dbReference type="Gene3D" id="3.40.50.1360">
    <property type="match status" value="1"/>
</dbReference>
<dbReference type="HAMAP" id="MF_00170">
    <property type="entry name" value="Rib_5P_isom_A"/>
    <property type="match status" value="1"/>
</dbReference>
<dbReference type="InterPro" id="IPR037171">
    <property type="entry name" value="NagB/RpiA_transferase-like"/>
</dbReference>
<dbReference type="InterPro" id="IPR020672">
    <property type="entry name" value="Ribose5P_isomerase_typA_subgr"/>
</dbReference>
<dbReference type="InterPro" id="IPR004788">
    <property type="entry name" value="Ribose5P_isomerase_type_A"/>
</dbReference>
<dbReference type="NCBIfam" id="NF001924">
    <property type="entry name" value="PRK00702.1"/>
    <property type="match status" value="1"/>
</dbReference>
<dbReference type="NCBIfam" id="TIGR00021">
    <property type="entry name" value="rpiA"/>
    <property type="match status" value="1"/>
</dbReference>
<dbReference type="PANTHER" id="PTHR11934">
    <property type="entry name" value="RIBOSE-5-PHOSPHATE ISOMERASE"/>
    <property type="match status" value="1"/>
</dbReference>
<dbReference type="PANTHER" id="PTHR11934:SF0">
    <property type="entry name" value="RIBOSE-5-PHOSPHATE ISOMERASE"/>
    <property type="match status" value="1"/>
</dbReference>
<dbReference type="Pfam" id="PF06026">
    <property type="entry name" value="Rib_5-P_isom_A"/>
    <property type="match status" value="1"/>
</dbReference>
<dbReference type="SUPFAM" id="SSF75445">
    <property type="entry name" value="D-ribose-5-phosphate isomerase (RpiA), lid domain"/>
    <property type="match status" value="1"/>
</dbReference>
<dbReference type="SUPFAM" id="SSF100950">
    <property type="entry name" value="NagB/RpiA/CoA transferase-like"/>
    <property type="match status" value="1"/>
</dbReference>
<comment type="function">
    <text evidence="1">Catalyzes the reversible conversion of ribose-5-phosphate to ribulose 5-phosphate.</text>
</comment>
<comment type="catalytic activity">
    <reaction evidence="1">
        <text>aldehydo-D-ribose 5-phosphate = D-ribulose 5-phosphate</text>
        <dbReference type="Rhea" id="RHEA:14657"/>
        <dbReference type="ChEBI" id="CHEBI:58121"/>
        <dbReference type="ChEBI" id="CHEBI:58273"/>
        <dbReference type="EC" id="5.3.1.6"/>
    </reaction>
</comment>
<comment type="pathway">
    <text evidence="1">Carbohydrate degradation; pentose phosphate pathway; D-ribose 5-phosphate from D-ribulose 5-phosphate (non-oxidative stage): step 1/1.</text>
</comment>
<comment type="subunit">
    <text evidence="1">Homodimer.</text>
</comment>
<comment type="similarity">
    <text evidence="1">Belongs to the ribose 5-phosphate isomerase family.</text>
</comment>